<evidence type="ECO:0000255" key="1">
    <source>
        <dbReference type="HAMAP-Rule" id="MF_01603"/>
    </source>
</evidence>
<comment type="function">
    <text evidence="1">Catalyzes the phosphorylation of D-glycero-D-manno-heptose 7-phosphate at the C-1 position to selectively form D-glycero-beta-D-manno-heptose-1,7-bisphosphate.</text>
</comment>
<comment type="function">
    <text evidence="1">Catalyzes the ADP transfer from ATP to D-glycero-beta-D-manno-heptose 1-phosphate, yielding ADP-D-glycero-beta-D-manno-heptose.</text>
</comment>
<comment type="catalytic activity">
    <reaction evidence="1">
        <text>D-glycero-beta-D-manno-heptose 7-phosphate + ATP = D-glycero-beta-D-manno-heptose 1,7-bisphosphate + ADP + H(+)</text>
        <dbReference type="Rhea" id="RHEA:27473"/>
        <dbReference type="ChEBI" id="CHEBI:15378"/>
        <dbReference type="ChEBI" id="CHEBI:30616"/>
        <dbReference type="ChEBI" id="CHEBI:60204"/>
        <dbReference type="ChEBI" id="CHEBI:60208"/>
        <dbReference type="ChEBI" id="CHEBI:456216"/>
        <dbReference type="EC" id="2.7.1.167"/>
    </reaction>
</comment>
<comment type="catalytic activity">
    <reaction evidence="1">
        <text>D-glycero-beta-D-manno-heptose 1-phosphate + ATP + H(+) = ADP-D-glycero-beta-D-manno-heptose + diphosphate</text>
        <dbReference type="Rhea" id="RHEA:27465"/>
        <dbReference type="ChEBI" id="CHEBI:15378"/>
        <dbReference type="ChEBI" id="CHEBI:30616"/>
        <dbReference type="ChEBI" id="CHEBI:33019"/>
        <dbReference type="ChEBI" id="CHEBI:59967"/>
        <dbReference type="ChEBI" id="CHEBI:61593"/>
        <dbReference type="EC" id="2.7.7.70"/>
    </reaction>
</comment>
<comment type="pathway">
    <text evidence="1">Nucleotide-sugar biosynthesis; ADP-L-glycero-beta-D-manno-heptose biosynthesis; ADP-L-glycero-beta-D-manno-heptose from D-glycero-beta-D-manno-heptose 7-phosphate: step 1/4.</text>
</comment>
<comment type="pathway">
    <text evidence="1">Nucleotide-sugar biosynthesis; ADP-L-glycero-beta-D-manno-heptose biosynthesis; ADP-L-glycero-beta-D-manno-heptose from D-glycero-beta-D-manno-heptose 7-phosphate: step 3/4.</text>
</comment>
<comment type="subunit">
    <text evidence="1">Homodimer.</text>
</comment>
<comment type="similarity">
    <text evidence="1">In the N-terminal section; belongs to the carbohydrate kinase PfkB family.</text>
</comment>
<comment type="similarity">
    <text evidence="1">In the C-terminal section; belongs to the cytidylyltransferase family.</text>
</comment>
<keyword id="KW-0067">ATP-binding</keyword>
<keyword id="KW-0119">Carbohydrate metabolism</keyword>
<keyword id="KW-0418">Kinase</keyword>
<keyword id="KW-0511">Multifunctional enzyme</keyword>
<keyword id="KW-0547">Nucleotide-binding</keyword>
<keyword id="KW-0548">Nucleotidyltransferase</keyword>
<keyword id="KW-0808">Transferase</keyword>
<sequence>MKVTLPDFRRAQVLVVGDVMLDRYWYGPTSRISPEAPVPVVKVETIEERPGGAANVAMNIASLGASARLVGLTGVDDAARALSTRLDEVHVECDFVAIPAQPTITKLRVLSRNQQLIRLDFEEGFGGVDPGPILARIRQALPQVGAVILSDYAKGALASVQAMICLARDAGVPVLIDPKGTDFERYRGATLLTPNLSEFEAVVGRCHSEQEIVDRGLALMERFDLTALLVTRSEQGMTLLQRGIAPLHMPTQAQEVYDVTGAGDTVIGMLAASIAAGASLDEACFLANAAAGVVVGKLGTSTVSPIELENAIRGRADTGFGVMTQEELKTAVLQARQRGEKVVMTNGVFDILHAGHVSYLANARRLGDRLIVAVNSDASTSRLKGPERPVNPLVQRMLVLAALEAVDWVIPFEEDTPQRIIAEILPDLLVKGGDYKPEEIAGGKEVIAAGGEVRVLNFEDGCSTSNIINIIRQGQND</sequence>
<dbReference type="EC" id="2.7.1.167" evidence="1"/>
<dbReference type="EC" id="2.7.7.70" evidence="1"/>
<dbReference type="EMBL" id="CP001600">
    <property type="protein sequence ID" value="ACR67771.1"/>
    <property type="molecule type" value="Genomic_DNA"/>
</dbReference>
<dbReference type="RefSeq" id="WP_015869971.1">
    <property type="nucleotide sequence ID" value="NZ_CP169062.1"/>
</dbReference>
<dbReference type="SMR" id="C5BHH2"/>
<dbReference type="STRING" id="67780.B6E78_13420"/>
<dbReference type="GeneID" id="69537619"/>
<dbReference type="KEGG" id="eic:NT01EI_0538"/>
<dbReference type="PATRIC" id="fig|634503.3.peg.488"/>
<dbReference type="HOGENOM" id="CLU_021150_2_1_6"/>
<dbReference type="OrthoDB" id="9802794at2"/>
<dbReference type="UniPathway" id="UPA00356">
    <property type="reaction ID" value="UER00437"/>
</dbReference>
<dbReference type="UniPathway" id="UPA00356">
    <property type="reaction ID" value="UER00439"/>
</dbReference>
<dbReference type="Proteomes" id="UP000001485">
    <property type="component" value="Chromosome"/>
</dbReference>
<dbReference type="GO" id="GO:0005829">
    <property type="term" value="C:cytosol"/>
    <property type="evidence" value="ECO:0007669"/>
    <property type="project" value="TreeGrafter"/>
</dbReference>
<dbReference type="GO" id="GO:0005524">
    <property type="term" value="F:ATP binding"/>
    <property type="evidence" value="ECO:0007669"/>
    <property type="project" value="UniProtKB-UniRule"/>
</dbReference>
<dbReference type="GO" id="GO:0033785">
    <property type="term" value="F:heptose 7-phosphate kinase activity"/>
    <property type="evidence" value="ECO:0007669"/>
    <property type="project" value="UniProtKB-UniRule"/>
</dbReference>
<dbReference type="GO" id="GO:0033786">
    <property type="term" value="F:heptose-1-phosphate adenylyltransferase activity"/>
    <property type="evidence" value="ECO:0007669"/>
    <property type="project" value="UniProtKB-UniRule"/>
</dbReference>
<dbReference type="GO" id="GO:0016773">
    <property type="term" value="F:phosphotransferase activity, alcohol group as acceptor"/>
    <property type="evidence" value="ECO:0007669"/>
    <property type="project" value="InterPro"/>
</dbReference>
<dbReference type="GO" id="GO:0097171">
    <property type="term" value="P:ADP-L-glycero-beta-D-manno-heptose biosynthetic process"/>
    <property type="evidence" value="ECO:0007669"/>
    <property type="project" value="UniProtKB-UniPathway"/>
</dbReference>
<dbReference type="CDD" id="cd01172">
    <property type="entry name" value="RfaE_like"/>
    <property type="match status" value="1"/>
</dbReference>
<dbReference type="FunFam" id="3.40.1190.20:FF:000002">
    <property type="entry name" value="Bifunctional protein HldE"/>
    <property type="match status" value="1"/>
</dbReference>
<dbReference type="FunFam" id="3.40.50.620:FF:000028">
    <property type="entry name" value="Bifunctional protein HldE"/>
    <property type="match status" value="1"/>
</dbReference>
<dbReference type="Gene3D" id="3.40.1190.20">
    <property type="match status" value="1"/>
</dbReference>
<dbReference type="Gene3D" id="3.40.50.620">
    <property type="entry name" value="HUPs"/>
    <property type="match status" value="1"/>
</dbReference>
<dbReference type="HAMAP" id="MF_01603">
    <property type="entry name" value="HldE"/>
    <property type="match status" value="1"/>
</dbReference>
<dbReference type="InterPro" id="IPR023030">
    <property type="entry name" value="Bifunc_HldE"/>
</dbReference>
<dbReference type="InterPro" id="IPR002173">
    <property type="entry name" value="Carboh/pur_kinase_PfkB_CS"/>
</dbReference>
<dbReference type="InterPro" id="IPR004821">
    <property type="entry name" value="Cyt_trans-like"/>
</dbReference>
<dbReference type="InterPro" id="IPR011611">
    <property type="entry name" value="PfkB_dom"/>
</dbReference>
<dbReference type="InterPro" id="IPR011913">
    <property type="entry name" value="RfaE_dom_I"/>
</dbReference>
<dbReference type="InterPro" id="IPR011914">
    <property type="entry name" value="RfaE_dom_II"/>
</dbReference>
<dbReference type="InterPro" id="IPR029056">
    <property type="entry name" value="Ribokinase-like"/>
</dbReference>
<dbReference type="InterPro" id="IPR014729">
    <property type="entry name" value="Rossmann-like_a/b/a_fold"/>
</dbReference>
<dbReference type="NCBIfam" id="TIGR00125">
    <property type="entry name" value="cyt_tran_rel"/>
    <property type="match status" value="1"/>
</dbReference>
<dbReference type="NCBIfam" id="NF008454">
    <property type="entry name" value="PRK11316.1"/>
    <property type="match status" value="1"/>
</dbReference>
<dbReference type="NCBIfam" id="TIGR02198">
    <property type="entry name" value="rfaE_dom_I"/>
    <property type="match status" value="1"/>
</dbReference>
<dbReference type="NCBIfam" id="TIGR02199">
    <property type="entry name" value="rfaE_dom_II"/>
    <property type="match status" value="1"/>
</dbReference>
<dbReference type="PANTHER" id="PTHR46969">
    <property type="entry name" value="BIFUNCTIONAL PROTEIN HLDE"/>
    <property type="match status" value="1"/>
</dbReference>
<dbReference type="PANTHER" id="PTHR46969:SF1">
    <property type="entry name" value="BIFUNCTIONAL PROTEIN HLDE"/>
    <property type="match status" value="1"/>
</dbReference>
<dbReference type="Pfam" id="PF01467">
    <property type="entry name" value="CTP_transf_like"/>
    <property type="match status" value="1"/>
</dbReference>
<dbReference type="Pfam" id="PF00294">
    <property type="entry name" value="PfkB"/>
    <property type="match status" value="1"/>
</dbReference>
<dbReference type="SUPFAM" id="SSF52374">
    <property type="entry name" value="Nucleotidylyl transferase"/>
    <property type="match status" value="1"/>
</dbReference>
<dbReference type="SUPFAM" id="SSF53613">
    <property type="entry name" value="Ribokinase-like"/>
    <property type="match status" value="1"/>
</dbReference>
<dbReference type="PROSITE" id="PS00583">
    <property type="entry name" value="PFKB_KINASES_1"/>
    <property type="match status" value="1"/>
</dbReference>
<proteinExistence type="inferred from homology"/>
<accession>C5BHH2</accession>
<gene>
    <name evidence="1" type="primary">hldE</name>
    <name type="ordered locus">NT01EI_0538</name>
</gene>
<reference key="1">
    <citation type="submission" date="2009-03" db="EMBL/GenBank/DDBJ databases">
        <title>Complete genome sequence of Edwardsiella ictaluri 93-146.</title>
        <authorList>
            <person name="Williams M.L."/>
            <person name="Gillaspy A.F."/>
            <person name="Dyer D.W."/>
            <person name="Thune R.L."/>
            <person name="Waldbieser G.C."/>
            <person name="Schuster S.C."/>
            <person name="Gipson J."/>
            <person name="Zaitshik J."/>
            <person name="Landry C."/>
            <person name="Lawrence M.L."/>
        </authorList>
    </citation>
    <scope>NUCLEOTIDE SEQUENCE [LARGE SCALE GENOMIC DNA]</scope>
    <source>
        <strain>93-146</strain>
    </source>
</reference>
<feature type="chain" id="PRO_1000215693" description="Bifunctional protein HldE">
    <location>
        <begin position="1"/>
        <end position="477"/>
    </location>
</feature>
<feature type="region of interest" description="Ribokinase">
    <location>
        <begin position="1"/>
        <end position="318"/>
    </location>
</feature>
<feature type="region of interest" description="Cytidylyltransferase">
    <location>
        <begin position="344"/>
        <end position="477"/>
    </location>
</feature>
<feature type="active site" evidence="1">
    <location>
        <position position="264"/>
    </location>
</feature>
<feature type="binding site" evidence="1">
    <location>
        <begin position="195"/>
        <end position="198"/>
    </location>
    <ligand>
        <name>ATP</name>
        <dbReference type="ChEBI" id="CHEBI:30616"/>
    </ligand>
</feature>
<organism>
    <name type="scientific">Edwardsiella ictaluri (strain 93-146)</name>
    <dbReference type="NCBI Taxonomy" id="634503"/>
    <lineage>
        <taxon>Bacteria</taxon>
        <taxon>Pseudomonadati</taxon>
        <taxon>Pseudomonadota</taxon>
        <taxon>Gammaproteobacteria</taxon>
        <taxon>Enterobacterales</taxon>
        <taxon>Hafniaceae</taxon>
        <taxon>Edwardsiella</taxon>
    </lineage>
</organism>
<name>HLDE_EDWI9</name>
<protein>
    <recommendedName>
        <fullName evidence="1">Bifunctional protein HldE</fullName>
    </recommendedName>
    <domain>
        <recommendedName>
            <fullName evidence="1">D-beta-D-heptose 7-phosphate kinase</fullName>
            <ecNumber evidence="1">2.7.1.167</ecNumber>
        </recommendedName>
        <alternativeName>
            <fullName evidence="1">D-beta-D-heptose 7-phosphotransferase</fullName>
        </alternativeName>
        <alternativeName>
            <fullName evidence="1">D-glycero-beta-D-manno-heptose-7-phosphate kinase</fullName>
        </alternativeName>
    </domain>
    <domain>
        <recommendedName>
            <fullName evidence="1">D-beta-D-heptose 1-phosphate adenylyltransferase</fullName>
            <ecNumber evidence="1">2.7.7.70</ecNumber>
        </recommendedName>
        <alternativeName>
            <fullName evidence="1">D-glycero-beta-D-manno-heptose 1-phosphate adenylyltransferase</fullName>
        </alternativeName>
    </domain>
</protein>